<proteinExistence type="inferred from homology"/>
<gene>
    <name type="primary">nox</name>
    <name type="ordered locus">MG275</name>
</gene>
<protein>
    <recommendedName>
        <fullName>NADH oxidase</fullName>
        <shortName>NOXase</shortName>
        <ecNumber evidence="2">1.6.3.4</ecNumber>
    </recommendedName>
</protein>
<dbReference type="EC" id="1.6.3.4" evidence="2"/>
<dbReference type="EMBL" id="L43967">
    <property type="protein sequence ID" value="AAC71497.2"/>
    <property type="molecule type" value="Genomic_DNA"/>
</dbReference>
<dbReference type="EMBL" id="U01786">
    <property type="protein sequence ID" value="AAD10607.1"/>
    <property type="status" value="ALT_INIT"/>
    <property type="molecule type" value="Genomic_DNA"/>
</dbReference>
<dbReference type="PIR" id="D64230">
    <property type="entry name" value="D64230"/>
</dbReference>
<dbReference type="RefSeq" id="WP_009885907.1">
    <property type="nucleotide sequence ID" value="NC_000908.2"/>
</dbReference>
<dbReference type="SMR" id="Q49408"/>
<dbReference type="STRING" id="243273.MG_275"/>
<dbReference type="GeneID" id="88282431"/>
<dbReference type="KEGG" id="mge:MG_275"/>
<dbReference type="eggNOG" id="COG0446">
    <property type="taxonomic scope" value="Bacteria"/>
</dbReference>
<dbReference type="HOGENOM" id="CLU_003291_1_0_14"/>
<dbReference type="InParanoid" id="Q49408"/>
<dbReference type="OrthoDB" id="9792592at2"/>
<dbReference type="Proteomes" id="UP000000807">
    <property type="component" value="Chromosome"/>
</dbReference>
<dbReference type="GO" id="GO:0008137">
    <property type="term" value="F:NADH dehydrogenase (ubiquinone) activity"/>
    <property type="evidence" value="ECO:0007669"/>
    <property type="project" value="UniProtKB-EC"/>
</dbReference>
<dbReference type="Gene3D" id="3.30.390.30">
    <property type="match status" value="1"/>
</dbReference>
<dbReference type="Gene3D" id="3.50.50.60">
    <property type="entry name" value="FAD/NAD(P)-binding domain"/>
    <property type="match status" value="2"/>
</dbReference>
<dbReference type="InterPro" id="IPR050260">
    <property type="entry name" value="FAD-bd_OxRdtase"/>
</dbReference>
<dbReference type="InterPro" id="IPR036188">
    <property type="entry name" value="FAD/NAD-bd_sf"/>
</dbReference>
<dbReference type="InterPro" id="IPR023753">
    <property type="entry name" value="FAD/NAD-binding_dom"/>
</dbReference>
<dbReference type="InterPro" id="IPR016156">
    <property type="entry name" value="FAD/NAD-linked_Rdtase_dimer_sf"/>
</dbReference>
<dbReference type="InterPro" id="IPR004099">
    <property type="entry name" value="Pyr_nucl-diS_OxRdtase_dimer"/>
</dbReference>
<dbReference type="PANTHER" id="PTHR43429:SF1">
    <property type="entry name" value="NAD(P)H SULFUR OXIDOREDUCTASE (COA-DEPENDENT)"/>
    <property type="match status" value="1"/>
</dbReference>
<dbReference type="PANTHER" id="PTHR43429">
    <property type="entry name" value="PYRIDINE NUCLEOTIDE-DISULFIDE OXIDOREDUCTASE DOMAIN-CONTAINING"/>
    <property type="match status" value="1"/>
</dbReference>
<dbReference type="Pfam" id="PF07992">
    <property type="entry name" value="Pyr_redox_2"/>
    <property type="match status" value="1"/>
</dbReference>
<dbReference type="Pfam" id="PF02852">
    <property type="entry name" value="Pyr_redox_dim"/>
    <property type="match status" value="1"/>
</dbReference>
<dbReference type="PRINTS" id="PR00368">
    <property type="entry name" value="FADPNR"/>
</dbReference>
<dbReference type="SUPFAM" id="SSF51905">
    <property type="entry name" value="FAD/NAD(P)-binding domain"/>
    <property type="match status" value="1"/>
</dbReference>
<dbReference type="SUPFAM" id="SSF55424">
    <property type="entry name" value="FAD/NAD-linked reductases, dimerisation (C-terminal) domain"/>
    <property type="match status" value="1"/>
</dbReference>
<evidence type="ECO:0000250" key="1"/>
<evidence type="ECO:0000250" key="2">
    <source>
        <dbReference type="UniProtKB" id="A2RIB7"/>
    </source>
</evidence>
<evidence type="ECO:0000250" key="3">
    <source>
        <dbReference type="UniProtKB" id="P37062"/>
    </source>
</evidence>
<evidence type="ECO:0000250" key="4">
    <source>
        <dbReference type="UniProtKB" id="Q5XC60"/>
    </source>
</evidence>
<evidence type="ECO:0000269" key="5">
    <source>
    </source>
</evidence>
<evidence type="ECO:0000305" key="6"/>
<comment type="function">
    <text evidence="1">Catalyzes the four-electron reduction of molecular oxygen to water.</text>
</comment>
<comment type="catalytic activity">
    <molecule>NADH oxidase</molecule>
    <reaction evidence="2">
        <text>2 NADH + O2 + 2 H(+) = 2 NAD(+) + 2 H2O</text>
        <dbReference type="Rhea" id="RHEA:37799"/>
        <dbReference type="ChEBI" id="CHEBI:15377"/>
        <dbReference type="ChEBI" id="CHEBI:15378"/>
        <dbReference type="ChEBI" id="CHEBI:15379"/>
        <dbReference type="ChEBI" id="CHEBI:57540"/>
        <dbReference type="ChEBI" id="CHEBI:57945"/>
        <dbReference type="EC" id="1.6.3.4"/>
    </reaction>
</comment>
<comment type="cofactor">
    <cofactor evidence="1">
        <name>FAD</name>
        <dbReference type="ChEBI" id="CHEBI:57692"/>
    </cofactor>
    <text evidence="1">Binds 1 FAD per subunit.</text>
</comment>
<comment type="disruption phenotype">
    <text evidence="5">Probably essential, it was not disrupted in a global transposon mutagenesis study.</text>
</comment>
<comment type="similarity">
    <text evidence="6">Belongs to the class-III pyridine nucleotide-disulfide oxidoreductase family.</text>
</comment>
<comment type="sequence caution" evidence="6">
    <conflict type="erroneous initiation">
        <sequence resource="EMBL-CDS" id="AAD10607"/>
    </conflict>
    <text>Extended N-terminus.</text>
</comment>
<reference key="1">
    <citation type="journal article" date="1995" name="Science">
        <title>The minimal gene complement of Mycoplasma genitalium.</title>
        <authorList>
            <person name="Fraser C.M."/>
            <person name="Gocayne J.D."/>
            <person name="White O."/>
            <person name="Adams M.D."/>
            <person name="Clayton R.A."/>
            <person name="Fleischmann R.D."/>
            <person name="Bult C.J."/>
            <person name="Kerlavage A.R."/>
            <person name="Sutton G.G."/>
            <person name="Kelley J.M."/>
            <person name="Fritchman J.L."/>
            <person name="Weidman J.F."/>
            <person name="Small K.V."/>
            <person name="Sandusky M."/>
            <person name="Fuhrmann J.L."/>
            <person name="Nguyen D.T."/>
            <person name="Utterback T.R."/>
            <person name="Saudek D.M."/>
            <person name="Phillips C.A."/>
            <person name="Merrick J.M."/>
            <person name="Tomb J.-F."/>
            <person name="Dougherty B.A."/>
            <person name="Bott K.F."/>
            <person name="Hu P.-C."/>
            <person name="Lucier T.S."/>
            <person name="Peterson S.N."/>
            <person name="Smith H.O."/>
            <person name="Hutchison C.A. III"/>
            <person name="Venter J.C."/>
        </authorList>
    </citation>
    <scope>NUCLEOTIDE SEQUENCE [LARGE SCALE GENOMIC DNA]</scope>
    <source>
        <strain>ATCC 33530 / DSM 19775 / NCTC 10195 / G37</strain>
    </source>
</reference>
<reference key="2">
    <citation type="journal article" date="1993" name="J. Bacteriol.">
        <title>A survey of the Mycoplasma genitalium genome by using random sequencing.</title>
        <authorList>
            <person name="Peterson S.N."/>
            <person name="Hu P.-C."/>
            <person name="Bott K.F."/>
            <person name="Hutchison C.A. III"/>
        </authorList>
    </citation>
    <scope>NUCLEOTIDE SEQUENCE [GENOMIC DNA] OF 1-28</scope>
    <source>
        <strain>ATCC 33530 / DSM 19775 / NCTC 10195 / G37</strain>
    </source>
</reference>
<reference key="3">
    <citation type="journal article" date="2006" name="Proc. Natl. Acad. Sci. U.S.A.">
        <title>Essential genes of a minimal bacterium.</title>
        <authorList>
            <person name="Glass J.I."/>
            <person name="Assad-Garcia N."/>
            <person name="Alperovich N."/>
            <person name="Yooseph S."/>
            <person name="Lewis M.R."/>
            <person name="Maruf M."/>
            <person name="Hutchison C.A. III"/>
            <person name="Smith H.O."/>
            <person name="Venter J.C."/>
        </authorList>
    </citation>
    <scope>SEQUENCE REVISION TO 260</scope>
    <scope>DISRUPTION PHENOTYPE</scope>
    <source>
        <strain>ATCC 33530 / DSM 19775 / NCTC 10195 / G37</strain>
    </source>
</reference>
<name>NAOX_MYCGE</name>
<feature type="chain" id="PRO_0000184702" description="NADH oxidase">
    <location>
        <begin position="1"/>
        <end position="478"/>
    </location>
</feature>
<feature type="active site" description="Proton acceptor" evidence="3">
    <location>
        <position position="11"/>
    </location>
</feature>
<feature type="active site" description="Redox-active">
    <location>
        <position position="43"/>
    </location>
</feature>
<feature type="binding site" evidence="1">
    <location>
        <begin position="8"/>
        <end position="12"/>
    </location>
    <ligand>
        <name>FAD</name>
        <dbReference type="ChEBI" id="CHEBI:57692"/>
    </ligand>
</feature>
<feature type="binding site" evidence="4">
    <location>
        <position position="33"/>
    </location>
    <ligand>
        <name>FAD</name>
        <dbReference type="ChEBI" id="CHEBI:57692"/>
    </ligand>
</feature>
<feature type="binding site" evidence="4">
    <location>
        <position position="43"/>
    </location>
    <ligand>
        <name>FAD</name>
        <dbReference type="ChEBI" id="CHEBI:57692"/>
    </ligand>
</feature>
<feature type="binding site" evidence="4">
    <location>
        <position position="80"/>
    </location>
    <ligand>
        <name>FAD</name>
        <dbReference type="ChEBI" id="CHEBI:57692"/>
    </ligand>
</feature>
<feature type="binding site" evidence="1">
    <location>
        <begin position="111"/>
        <end position="114"/>
    </location>
    <ligand>
        <name>FAD</name>
        <dbReference type="ChEBI" id="CHEBI:57692"/>
    </ligand>
</feature>
<feature type="binding site" evidence="4">
    <location>
        <position position="149"/>
    </location>
    <ligand>
        <name>FAD</name>
        <dbReference type="ChEBI" id="CHEBI:57692"/>
    </ligand>
</feature>
<feature type="binding site" evidence="1">
    <location>
        <begin position="170"/>
        <end position="185"/>
    </location>
    <ligand>
        <name>NAD(+)</name>
        <dbReference type="ChEBI" id="CHEBI:57540"/>
    </ligand>
</feature>
<feature type="binding site" evidence="4">
    <location>
        <position position="177"/>
    </location>
    <ligand>
        <name>FAD</name>
        <dbReference type="ChEBI" id="CHEBI:57692"/>
    </ligand>
</feature>
<feature type="binding site" evidence="3">
    <location>
        <position position="197"/>
    </location>
    <ligand>
        <name>NAD(+)</name>
        <dbReference type="ChEBI" id="CHEBI:57540"/>
    </ligand>
</feature>
<feature type="binding site" evidence="3">
    <location>
        <position position="264"/>
    </location>
    <ligand>
        <name>NAD(+)</name>
        <dbReference type="ChEBI" id="CHEBI:57540"/>
    </ligand>
</feature>
<feature type="binding site" evidence="1">
    <location>
        <begin position="295"/>
        <end position="305"/>
    </location>
    <ligand>
        <name>FAD</name>
        <dbReference type="ChEBI" id="CHEBI:57692"/>
    </ligand>
</feature>
<feature type="binding site" evidence="4">
    <location>
        <position position="322"/>
    </location>
    <ligand>
        <name>FAD</name>
        <dbReference type="ChEBI" id="CHEBI:57692"/>
    </ligand>
</feature>
<feature type="binding site" evidence="4">
    <location>
        <position position="323"/>
    </location>
    <ligand>
        <name>FAD</name>
        <dbReference type="ChEBI" id="CHEBI:57692"/>
    </ligand>
</feature>
<feature type="binding site" evidence="4">
    <location>
        <position position="324"/>
    </location>
    <ligand>
        <name>FAD</name>
        <dbReference type="ChEBI" id="CHEBI:57692"/>
    </ligand>
</feature>
<feature type="binding site" evidence="3">
    <location>
        <position position="353"/>
    </location>
    <ligand>
        <name>NAD(+)</name>
        <dbReference type="ChEBI" id="CHEBI:57540"/>
    </ligand>
</feature>
<feature type="binding site" evidence="4">
    <location>
        <position position="450"/>
    </location>
    <ligand>
        <name>FAD</name>
        <dbReference type="ChEBI" id="CHEBI:57692"/>
    </ligand>
</feature>
<feature type="modified residue" description="Cysteine sulfinic acid (-SO2H)" evidence="4">
    <location>
        <position position="43"/>
    </location>
</feature>
<feature type="sequence conflict" description="In Ref. 2; AAD10607." evidence="6" ref="2">
    <original>K</original>
    <variation>P</variation>
    <location>
        <position position="28"/>
    </location>
</feature>
<sequence>MKKVIVIGINHAGTSFIRTLLSKSKDFKVNAYDRNTNISFLGCGIALAVSGVVKNTDDLFYSNPEELKQMGANIFMSHDVTNIDLIKKQVTVRDLTSNKEFTDQFDQLVIASGAWPICMNVENKVTHKPLEFNYTDKYCGNVKNLISCKLYQHALTLIDSFRKDKTIKSVAIVGSGYIGLELAEAAWLCKKQVTVIDLLDKPAGNNFDHEFTDELEKVMQKDGLKLMMGCSVKGFVVDSTNNVVKGVETDKGIVNADLVIQSIGFRPSTKFVPKDQNFEFIHNGSIKVNEFLQALNHKDVYVIGGCAAIYNAASEQYENIDLATNAVKSGLVAAMHIIGSNQVKLQSIVGTNALHIFGLNLAACGLTEQRAKKLGFDVGISVVDDNDRPEFMGSYDKVRFKLVYDKKTLRILGAQLLSWNTNHSEIIFYIALAIQKQMLLTELGLVDVYFLPHYNKPFNFVLATVLQALGFSYYIPKK</sequence>
<keyword id="KW-0274">FAD</keyword>
<keyword id="KW-0285">Flavoprotein</keyword>
<keyword id="KW-0520">NAD</keyword>
<keyword id="KW-0558">Oxidation</keyword>
<keyword id="KW-0560">Oxidoreductase</keyword>
<keyword id="KW-0676">Redox-active center</keyword>
<keyword id="KW-1185">Reference proteome</keyword>
<organism>
    <name type="scientific">Mycoplasma genitalium (strain ATCC 33530 / DSM 19775 / NCTC 10195 / G37)</name>
    <name type="common">Mycoplasmoides genitalium</name>
    <dbReference type="NCBI Taxonomy" id="243273"/>
    <lineage>
        <taxon>Bacteria</taxon>
        <taxon>Bacillati</taxon>
        <taxon>Mycoplasmatota</taxon>
        <taxon>Mycoplasmoidales</taxon>
        <taxon>Mycoplasmoidaceae</taxon>
        <taxon>Mycoplasmoides</taxon>
    </lineage>
</organism>
<accession>Q49408</accession>
<accession>Q49235</accession>